<proteinExistence type="evidence at transcript level"/>
<feature type="chain" id="PRO_0000284132" description="Dolichyl pyrophosphate Man9GlcNAc2 alpha-1,3-glucosyltransferase">
    <location>
        <begin position="1"/>
        <end position="507"/>
    </location>
</feature>
<feature type="topological domain" description="Cytoplasmic" evidence="3">
    <location>
        <begin position="1"/>
        <end position="2"/>
    </location>
</feature>
<feature type="transmembrane region" description="Helical" evidence="2">
    <location>
        <begin position="3"/>
        <end position="23"/>
    </location>
</feature>
<feature type="topological domain" description="Lumenal" evidence="3">
    <location>
        <begin position="24"/>
        <end position="114"/>
    </location>
</feature>
<feature type="transmembrane region" description="Helical" evidence="2">
    <location>
        <begin position="115"/>
        <end position="135"/>
    </location>
</feature>
<feature type="topological domain" description="Cytoplasmic" evidence="3">
    <location>
        <begin position="136"/>
        <end position="143"/>
    </location>
</feature>
<feature type="transmembrane region" description="Helical" evidence="2">
    <location>
        <begin position="144"/>
        <end position="164"/>
    </location>
</feature>
<feature type="topological domain" description="Lumenal" evidence="3">
    <location>
        <begin position="165"/>
        <end position="172"/>
    </location>
</feature>
<feature type="transmembrane region" description="Helical" evidence="2">
    <location>
        <begin position="173"/>
        <end position="193"/>
    </location>
</feature>
<feature type="topological domain" description="Cytoplasmic" evidence="3">
    <location>
        <begin position="194"/>
        <end position="229"/>
    </location>
</feature>
<feature type="transmembrane region" description="Helical" evidence="2">
    <location>
        <begin position="230"/>
        <end position="250"/>
    </location>
</feature>
<feature type="topological domain" description="Lumenal" evidence="3">
    <location>
        <begin position="251"/>
        <end position="297"/>
    </location>
</feature>
<feature type="transmembrane region" description="Helical" evidence="2">
    <location>
        <begin position="298"/>
        <end position="318"/>
    </location>
</feature>
<feature type="topological domain" description="Cytoplasmic" evidence="3">
    <location>
        <begin position="319"/>
        <end position="332"/>
    </location>
</feature>
<feature type="transmembrane region" description="Helical" evidence="2">
    <location>
        <begin position="333"/>
        <end position="353"/>
    </location>
</feature>
<feature type="topological domain" description="Lumenal" evidence="3">
    <location>
        <begin position="354"/>
        <end position="361"/>
    </location>
</feature>
<feature type="transmembrane region" description="Helical" evidence="2">
    <location>
        <begin position="362"/>
        <end position="382"/>
    </location>
</feature>
<feature type="topological domain" description="Cytoplasmic" evidence="3">
    <location>
        <begin position="383"/>
        <end position="385"/>
    </location>
</feature>
<feature type="transmembrane region" description="Helical" evidence="2">
    <location>
        <begin position="386"/>
        <end position="406"/>
    </location>
</feature>
<feature type="topological domain" description="Lumenal" evidence="3">
    <location>
        <begin position="407"/>
        <end position="437"/>
    </location>
</feature>
<feature type="transmembrane region" description="Helical" evidence="2">
    <location>
        <begin position="438"/>
        <end position="458"/>
    </location>
</feature>
<feature type="topological domain" description="Cytoplasmic" evidence="3">
    <location>
        <begin position="459"/>
        <end position="468"/>
    </location>
</feature>
<feature type="transmembrane region" description="Helical" evidence="2">
    <location>
        <begin position="469"/>
        <end position="489"/>
    </location>
</feature>
<feature type="topological domain" description="Lumenal" evidence="3">
    <location>
        <begin position="490"/>
        <end position="507"/>
    </location>
</feature>
<feature type="glycosylation site" description="N-linked (GlcNAc...) asparagine" evidence="2">
    <location>
        <position position="59"/>
    </location>
</feature>
<feature type="sequence conflict" description="In Ref. 1; BAE34254." evidence="3" ref="1">
    <original>L</original>
    <variation>F</variation>
    <location>
        <position position="442"/>
    </location>
</feature>
<name>ALG6_MOUSE</name>
<gene>
    <name evidence="4" type="primary">Alg6</name>
</gene>
<reference key="1">
    <citation type="journal article" date="2005" name="Science">
        <title>The transcriptional landscape of the mammalian genome.</title>
        <authorList>
            <person name="Carninci P."/>
            <person name="Kasukawa T."/>
            <person name="Katayama S."/>
            <person name="Gough J."/>
            <person name="Frith M.C."/>
            <person name="Maeda N."/>
            <person name="Oyama R."/>
            <person name="Ravasi T."/>
            <person name="Lenhard B."/>
            <person name="Wells C."/>
            <person name="Kodzius R."/>
            <person name="Shimokawa K."/>
            <person name="Bajic V.B."/>
            <person name="Brenner S.E."/>
            <person name="Batalov S."/>
            <person name="Forrest A.R."/>
            <person name="Zavolan M."/>
            <person name="Davis M.J."/>
            <person name="Wilming L.G."/>
            <person name="Aidinis V."/>
            <person name="Allen J.E."/>
            <person name="Ambesi-Impiombato A."/>
            <person name="Apweiler R."/>
            <person name="Aturaliya R.N."/>
            <person name="Bailey T.L."/>
            <person name="Bansal M."/>
            <person name="Baxter L."/>
            <person name="Beisel K.W."/>
            <person name="Bersano T."/>
            <person name="Bono H."/>
            <person name="Chalk A.M."/>
            <person name="Chiu K.P."/>
            <person name="Choudhary V."/>
            <person name="Christoffels A."/>
            <person name="Clutterbuck D.R."/>
            <person name="Crowe M.L."/>
            <person name="Dalla E."/>
            <person name="Dalrymple B.P."/>
            <person name="de Bono B."/>
            <person name="Della Gatta G."/>
            <person name="di Bernardo D."/>
            <person name="Down T."/>
            <person name="Engstrom P."/>
            <person name="Fagiolini M."/>
            <person name="Faulkner G."/>
            <person name="Fletcher C.F."/>
            <person name="Fukushima T."/>
            <person name="Furuno M."/>
            <person name="Futaki S."/>
            <person name="Gariboldi M."/>
            <person name="Georgii-Hemming P."/>
            <person name="Gingeras T.R."/>
            <person name="Gojobori T."/>
            <person name="Green R.E."/>
            <person name="Gustincich S."/>
            <person name="Harbers M."/>
            <person name="Hayashi Y."/>
            <person name="Hensch T.K."/>
            <person name="Hirokawa N."/>
            <person name="Hill D."/>
            <person name="Huminiecki L."/>
            <person name="Iacono M."/>
            <person name="Ikeo K."/>
            <person name="Iwama A."/>
            <person name="Ishikawa T."/>
            <person name="Jakt M."/>
            <person name="Kanapin A."/>
            <person name="Katoh M."/>
            <person name="Kawasawa Y."/>
            <person name="Kelso J."/>
            <person name="Kitamura H."/>
            <person name="Kitano H."/>
            <person name="Kollias G."/>
            <person name="Krishnan S.P."/>
            <person name="Kruger A."/>
            <person name="Kummerfeld S.K."/>
            <person name="Kurochkin I.V."/>
            <person name="Lareau L.F."/>
            <person name="Lazarevic D."/>
            <person name="Lipovich L."/>
            <person name="Liu J."/>
            <person name="Liuni S."/>
            <person name="McWilliam S."/>
            <person name="Madan Babu M."/>
            <person name="Madera M."/>
            <person name="Marchionni L."/>
            <person name="Matsuda H."/>
            <person name="Matsuzawa S."/>
            <person name="Miki H."/>
            <person name="Mignone F."/>
            <person name="Miyake S."/>
            <person name="Morris K."/>
            <person name="Mottagui-Tabar S."/>
            <person name="Mulder N."/>
            <person name="Nakano N."/>
            <person name="Nakauchi H."/>
            <person name="Ng P."/>
            <person name="Nilsson R."/>
            <person name="Nishiguchi S."/>
            <person name="Nishikawa S."/>
            <person name="Nori F."/>
            <person name="Ohara O."/>
            <person name="Okazaki Y."/>
            <person name="Orlando V."/>
            <person name="Pang K.C."/>
            <person name="Pavan W.J."/>
            <person name="Pavesi G."/>
            <person name="Pesole G."/>
            <person name="Petrovsky N."/>
            <person name="Piazza S."/>
            <person name="Reed J."/>
            <person name="Reid J.F."/>
            <person name="Ring B.Z."/>
            <person name="Ringwald M."/>
            <person name="Rost B."/>
            <person name="Ruan Y."/>
            <person name="Salzberg S.L."/>
            <person name="Sandelin A."/>
            <person name="Schneider C."/>
            <person name="Schoenbach C."/>
            <person name="Sekiguchi K."/>
            <person name="Semple C.A."/>
            <person name="Seno S."/>
            <person name="Sessa L."/>
            <person name="Sheng Y."/>
            <person name="Shibata Y."/>
            <person name="Shimada H."/>
            <person name="Shimada K."/>
            <person name="Silva D."/>
            <person name="Sinclair B."/>
            <person name="Sperling S."/>
            <person name="Stupka E."/>
            <person name="Sugiura K."/>
            <person name="Sultana R."/>
            <person name="Takenaka Y."/>
            <person name="Taki K."/>
            <person name="Tammoja K."/>
            <person name="Tan S.L."/>
            <person name="Tang S."/>
            <person name="Taylor M.S."/>
            <person name="Tegner J."/>
            <person name="Teichmann S.A."/>
            <person name="Ueda H.R."/>
            <person name="van Nimwegen E."/>
            <person name="Verardo R."/>
            <person name="Wei C.L."/>
            <person name="Yagi K."/>
            <person name="Yamanishi H."/>
            <person name="Zabarovsky E."/>
            <person name="Zhu S."/>
            <person name="Zimmer A."/>
            <person name="Hide W."/>
            <person name="Bult C."/>
            <person name="Grimmond S.M."/>
            <person name="Teasdale R.D."/>
            <person name="Liu E.T."/>
            <person name="Brusic V."/>
            <person name="Quackenbush J."/>
            <person name="Wahlestedt C."/>
            <person name="Mattick J.S."/>
            <person name="Hume D.A."/>
            <person name="Kai C."/>
            <person name="Sasaki D."/>
            <person name="Tomaru Y."/>
            <person name="Fukuda S."/>
            <person name="Kanamori-Katayama M."/>
            <person name="Suzuki M."/>
            <person name="Aoki J."/>
            <person name="Arakawa T."/>
            <person name="Iida J."/>
            <person name="Imamura K."/>
            <person name="Itoh M."/>
            <person name="Kato T."/>
            <person name="Kawaji H."/>
            <person name="Kawagashira N."/>
            <person name="Kawashima T."/>
            <person name="Kojima M."/>
            <person name="Kondo S."/>
            <person name="Konno H."/>
            <person name="Nakano K."/>
            <person name="Ninomiya N."/>
            <person name="Nishio T."/>
            <person name="Okada M."/>
            <person name="Plessy C."/>
            <person name="Shibata K."/>
            <person name="Shiraki T."/>
            <person name="Suzuki S."/>
            <person name="Tagami M."/>
            <person name="Waki K."/>
            <person name="Watahiki A."/>
            <person name="Okamura-Oho Y."/>
            <person name="Suzuki H."/>
            <person name="Kawai J."/>
            <person name="Hayashizaki Y."/>
        </authorList>
    </citation>
    <scope>NUCLEOTIDE SEQUENCE [LARGE SCALE MRNA]</scope>
    <source>
        <strain>NOD</strain>
        <tissue>Spleen</tissue>
    </source>
</reference>
<reference key="2">
    <citation type="journal article" date="2009" name="PLoS Biol.">
        <title>Lineage-specific biology revealed by a finished genome assembly of the mouse.</title>
        <authorList>
            <person name="Church D.M."/>
            <person name="Goodstadt L."/>
            <person name="Hillier L.W."/>
            <person name="Zody M.C."/>
            <person name="Goldstein S."/>
            <person name="She X."/>
            <person name="Bult C.J."/>
            <person name="Agarwala R."/>
            <person name="Cherry J.L."/>
            <person name="DiCuccio M."/>
            <person name="Hlavina W."/>
            <person name="Kapustin Y."/>
            <person name="Meric P."/>
            <person name="Maglott D."/>
            <person name="Birtle Z."/>
            <person name="Marques A.C."/>
            <person name="Graves T."/>
            <person name="Zhou S."/>
            <person name="Teague B."/>
            <person name="Potamousis K."/>
            <person name="Churas C."/>
            <person name="Place M."/>
            <person name="Herschleb J."/>
            <person name="Runnheim R."/>
            <person name="Forrest D."/>
            <person name="Amos-Landgraf J."/>
            <person name="Schwartz D.C."/>
            <person name="Cheng Z."/>
            <person name="Lindblad-Toh K."/>
            <person name="Eichler E.E."/>
            <person name="Ponting C.P."/>
        </authorList>
    </citation>
    <scope>NUCLEOTIDE SEQUENCE [LARGE SCALE GENOMIC DNA]</scope>
    <source>
        <strain>C57BL/6J</strain>
    </source>
</reference>
<reference key="3">
    <citation type="journal article" date="2004" name="Genome Res.">
        <title>The status, quality, and expansion of the NIH full-length cDNA project: the Mammalian Gene Collection (MGC).</title>
        <authorList>
            <consortium name="The MGC Project Team"/>
        </authorList>
    </citation>
    <scope>NUCLEOTIDE SEQUENCE [LARGE SCALE MRNA]</scope>
    <source>
        <tissue>Embryo</tissue>
    </source>
</reference>
<dbReference type="EC" id="2.4.1.267" evidence="1"/>
<dbReference type="EMBL" id="AK157903">
    <property type="protein sequence ID" value="BAE34254.1"/>
    <property type="molecule type" value="mRNA"/>
</dbReference>
<dbReference type="EMBL" id="AK171887">
    <property type="protein sequence ID" value="BAE42720.1"/>
    <property type="molecule type" value="mRNA"/>
</dbReference>
<dbReference type="EMBL" id="BX005053">
    <property type="status" value="NOT_ANNOTATED_CDS"/>
    <property type="molecule type" value="Genomic_DNA"/>
</dbReference>
<dbReference type="EMBL" id="BC050854">
    <property type="protein sequence ID" value="AAH50854.1"/>
    <property type="molecule type" value="mRNA"/>
</dbReference>
<dbReference type="CCDS" id="CCDS38818.1"/>
<dbReference type="RefSeq" id="NP_001074733.1">
    <property type="nucleotide sequence ID" value="NM_001081264.1"/>
</dbReference>
<dbReference type="SMR" id="Q3TAE8"/>
<dbReference type="BioGRID" id="236020">
    <property type="interactions" value="1"/>
</dbReference>
<dbReference type="FunCoup" id="Q3TAE8">
    <property type="interactions" value="2466"/>
</dbReference>
<dbReference type="STRING" id="10090.ENSMUSP00000095574"/>
<dbReference type="CAZy" id="GT57">
    <property type="family name" value="Glycosyltransferase Family 57"/>
</dbReference>
<dbReference type="GlyGen" id="Q3TAE8">
    <property type="glycosylation" value="1 site"/>
</dbReference>
<dbReference type="PhosphoSitePlus" id="Q3TAE8"/>
<dbReference type="PaxDb" id="10090-ENSMUSP00000095574"/>
<dbReference type="PeptideAtlas" id="Q3TAE8"/>
<dbReference type="ProteomicsDB" id="296223"/>
<dbReference type="Antibodypedia" id="33348">
    <property type="antibodies" value="109 antibodies from 23 providers"/>
</dbReference>
<dbReference type="Ensembl" id="ENSMUST00000097961.9">
    <property type="protein sequence ID" value="ENSMUSP00000095574.3"/>
    <property type="gene ID" value="ENSMUSG00000073792.12"/>
</dbReference>
<dbReference type="GeneID" id="320438"/>
<dbReference type="KEGG" id="mmu:320438"/>
<dbReference type="UCSC" id="uc008tuw.1">
    <property type="organism name" value="mouse"/>
</dbReference>
<dbReference type="AGR" id="MGI:2444031"/>
<dbReference type="CTD" id="29929"/>
<dbReference type="MGI" id="MGI:2444031">
    <property type="gene designation" value="Alg6"/>
</dbReference>
<dbReference type="VEuPathDB" id="HostDB:ENSMUSG00000073792"/>
<dbReference type="eggNOG" id="KOG2575">
    <property type="taxonomic scope" value="Eukaryota"/>
</dbReference>
<dbReference type="GeneTree" id="ENSGT00940000153733"/>
<dbReference type="HOGENOM" id="CLU_008110_3_0_1"/>
<dbReference type="InParanoid" id="Q3TAE8"/>
<dbReference type="OMA" id="FQVPPMH"/>
<dbReference type="OrthoDB" id="4983at2759"/>
<dbReference type="PhylomeDB" id="Q3TAE8"/>
<dbReference type="TreeFam" id="TF314522"/>
<dbReference type="Reactome" id="R-MMU-446193">
    <property type="pathway name" value="Biosynthesis of the N-glycan precursor (dolichol lipid-linked oligosaccharide, LLO) and transfer to a nascent protein"/>
</dbReference>
<dbReference type="UniPathway" id="UPA00378"/>
<dbReference type="BioGRID-ORCS" id="320438">
    <property type="hits" value="19 hits in 82 CRISPR screens"/>
</dbReference>
<dbReference type="PRO" id="PR:Q3TAE8"/>
<dbReference type="Proteomes" id="UP000000589">
    <property type="component" value="Chromosome 4"/>
</dbReference>
<dbReference type="RNAct" id="Q3TAE8">
    <property type="molecule type" value="protein"/>
</dbReference>
<dbReference type="Bgee" id="ENSMUSG00000073792">
    <property type="expression patterns" value="Expressed in yolk sac and 64 other cell types or tissues"/>
</dbReference>
<dbReference type="ExpressionAtlas" id="Q3TAE8">
    <property type="expression patterns" value="baseline and differential"/>
</dbReference>
<dbReference type="GO" id="GO:0005789">
    <property type="term" value="C:endoplasmic reticulum membrane"/>
    <property type="evidence" value="ECO:0007669"/>
    <property type="project" value="UniProtKB-SubCell"/>
</dbReference>
<dbReference type="GO" id="GO:0042281">
    <property type="term" value="F:dolichyl pyrophosphate Man9GlcNAc2 alpha-1,3-glucosyltransferase activity"/>
    <property type="evidence" value="ECO:0000250"/>
    <property type="project" value="UniProtKB"/>
</dbReference>
<dbReference type="GO" id="GO:0046527">
    <property type="term" value="F:glucosyltransferase activity"/>
    <property type="evidence" value="ECO:0000266"/>
    <property type="project" value="MGI"/>
</dbReference>
<dbReference type="GO" id="GO:0006488">
    <property type="term" value="P:dolichol-linked oligosaccharide biosynthetic process"/>
    <property type="evidence" value="ECO:0000250"/>
    <property type="project" value="UniProtKB"/>
</dbReference>
<dbReference type="GO" id="GO:0006487">
    <property type="term" value="P:protein N-linked glycosylation"/>
    <property type="evidence" value="ECO:0000250"/>
    <property type="project" value="UniProtKB"/>
</dbReference>
<dbReference type="InterPro" id="IPR004856">
    <property type="entry name" value="Glyco_trans_ALG6/ALG8"/>
</dbReference>
<dbReference type="PANTHER" id="PTHR12413">
    <property type="entry name" value="DOLICHYL GLYCOSYLTRANSFERASE"/>
    <property type="match status" value="1"/>
</dbReference>
<dbReference type="PANTHER" id="PTHR12413:SF1">
    <property type="entry name" value="DOLICHYL PYROPHOSPHATE MAN9GLCNAC2 ALPHA-1,3-GLUCOSYLTRANSFERASE"/>
    <property type="match status" value="1"/>
</dbReference>
<dbReference type="Pfam" id="PF03155">
    <property type="entry name" value="Alg6_Alg8"/>
    <property type="match status" value="1"/>
</dbReference>
<protein>
    <recommendedName>
        <fullName evidence="1">Dolichyl pyrophosphate Man9GlcNAc2 alpha-1,3-glucosyltransferase</fullName>
        <ecNumber evidence="1">2.4.1.267</ecNumber>
    </recommendedName>
    <alternativeName>
        <fullName evidence="4">Asparagine-linked glycosylation protein 6 homolog</fullName>
    </alternativeName>
    <alternativeName>
        <fullName>Dol-P-Glc:Man(9)GlcNAc(2)-PP-Dol alpha-1,3-glucosyltransferase</fullName>
    </alternativeName>
    <alternativeName>
        <fullName>Dolichyl-P-Glc:Man9GlcNAc2-PP-dolichyl glucosyltransferase</fullName>
    </alternativeName>
</protein>
<accession>Q3TAE8</accession>
<accession>Q3TZF4</accession>
<comment type="function">
    <text evidence="1">Dolichyl pyrophosphate Man9GlcNAc2 alpha-1,3-glucosyltransferase that operates in the biosynthetic pathway of dolichol-linked oligosaccharides, the glycan precursors employed in protein asparagine (N)-glycosylation. The assembly of dolichol-linked oligosaccharides begins on the cytosolic side of the endoplasmic reticulum membrane and finishes in its lumen. The sequential addition of sugars to dolichol pyrophosphate produces dolichol-linked oligosaccharides containing fourteen sugars, including two GlcNAcs, nine mannoses and three glucoses. Once assembled, the oligosaccharide is transferred from the lipid to nascent proteins by oligosaccharyltransferases. In the lumen of the endoplasmic reticulum, adds the first glucose residue from dolichyl phosphate glucose (Dol-P-Glc) onto the lipid-linked oligosaccharide intermediate Man(9)GlcNAc(2)-PP-Dol to produce Glc(1)Man(9)GlcNAc(2)-PP-Dol. Glc(1)Man(9)GlcNAc(2)-PP-Dol is a substrate for ALG8, the following enzyme in the biosynthetic pathway.</text>
</comment>
<comment type="catalytic activity">
    <reaction evidence="1">
        <text>an alpha-D-Man-(1-&gt;2)-alpha-D-Man-(1-&gt;2)-alpha-D-Man-(1-&gt;3)-[alpha-D-Man-(1-&gt;2)-alpha-D-Man-(1-&gt;3)-[alpha-D-Man-(1-&gt;2)-alpha-D-Man-(1-&gt;6)]-alpha-D-Man-(1-&gt;6)]-beta-D-Man-(1-&gt;4)-beta-D-GlcNAc-(1-&gt;4)-alpha-D-GlcNAc-diphospho-di-trans,poly-cis-dolichol + a di-trans,poly-cis-dolichyl beta-D-glucosyl phosphate = an alpha-D-Glc-(1-&gt;3)-alpha-D-Man-(1-&gt;2)-alpha-D-Man-(1-&gt;2)-alpha-D-Man-(1-&gt;3)-[alpha-D-Man-(1-&gt;2)-alpha-D-Man-(1-&gt;3)-[alpha-D-Man-(1-&gt;2)-alpha-D-Man-(1-&gt;6)]-alpha-D-Man-(1-&gt;6)]-beta-D-Man-(1-&gt;4)-beta-D-GlcNAc-(1-&gt;4)-alpha-D-GlcNAc-diphospho-di-trans,poly-cis-dolichol + a di-trans,poly-cis-dolichyl phosphate + H(+)</text>
        <dbReference type="Rhea" id="RHEA:30635"/>
        <dbReference type="Rhea" id="RHEA-COMP:19498"/>
        <dbReference type="Rhea" id="RHEA-COMP:19502"/>
        <dbReference type="Rhea" id="RHEA-COMP:19520"/>
        <dbReference type="Rhea" id="RHEA-COMP:19521"/>
        <dbReference type="ChEBI" id="CHEBI:15378"/>
        <dbReference type="ChEBI" id="CHEBI:57525"/>
        <dbReference type="ChEBI" id="CHEBI:57683"/>
        <dbReference type="ChEBI" id="CHEBI:132520"/>
        <dbReference type="ChEBI" id="CHEBI:132521"/>
        <dbReference type="EC" id="2.4.1.267"/>
    </reaction>
    <physiologicalReaction direction="left-to-right" evidence="1">
        <dbReference type="Rhea" id="RHEA:30636"/>
    </physiologicalReaction>
</comment>
<comment type="pathway">
    <text evidence="1">Protein modification; protein glycosylation.</text>
</comment>
<comment type="subcellular location">
    <subcellularLocation>
        <location evidence="1">Endoplasmic reticulum membrane</location>
        <topology evidence="2">Multi-pass membrane protein</topology>
    </subcellularLocation>
</comment>
<comment type="similarity">
    <text evidence="3">Belongs to the ALG6/ALG8 glucosyltransferase family.</text>
</comment>
<keyword id="KW-0256">Endoplasmic reticulum</keyword>
<keyword id="KW-0325">Glycoprotein</keyword>
<keyword id="KW-0328">Glycosyltransferase</keyword>
<keyword id="KW-0472">Membrane</keyword>
<keyword id="KW-1185">Reference proteome</keyword>
<keyword id="KW-0808">Transferase</keyword>
<keyword id="KW-0812">Transmembrane</keyword>
<keyword id="KW-1133">Transmembrane helix</keyword>
<evidence type="ECO:0000250" key="1">
    <source>
        <dbReference type="UniProtKB" id="Q9Y672"/>
    </source>
</evidence>
<evidence type="ECO:0000255" key="2"/>
<evidence type="ECO:0000305" key="3"/>
<evidence type="ECO:0000312" key="4">
    <source>
        <dbReference type="MGI" id="MGI:2444031"/>
    </source>
</evidence>
<sequence length="507" mass="57874">MESWPWMAVVVLLGLTVRWTVSLSSYSGAGKPPMFGDYEAQRHWQEITLNLPVKQWYFNSSDNNLLYWGLDYPPLTAYHSLLCAYVAKFINPDWVALHTSRGYESQAHKLFMRATVLAADLLIYVPAVLLYCYSLKEISPKRKIASALCILLYPGLILIDYGHFQYNSVSLGFALWGVLGVSWDWDLLGSLAFCLALNYKQMELYHSLPFFCFLLGKCFKKGLKGKGLALFIRIACTVLASFLLCWLPFLTEREHALQVVRRLFPVDRGLFEDKVANIWCSVNVFLKIKDTLPRHIQIAISFCFTLLSLLPACIKLTVRPSCKGFRFTLVSCALSFFLFSFQVHEKSILLVSLPVCLVLTEIPFMSTWFLLVSTFSMLPLLLKDELLLPSVVTVMAFVIACGTFFPMLENTSEEQLQLKSFAVSVRRHLPGFTFLPRIMQCLFLSSVITMVLLTILSVTLDPPQKLPDLFPVLICFVSCVNFVFFLVYFNIVIMWDSKNGRNRKKIE</sequence>
<organism>
    <name type="scientific">Mus musculus</name>
    <name type="common">Mouse</name>
    <dbReference type="NCBI Taxonomy" id="10090"/>
    <lineage>
        <taxon>Eukaryota</taxon>
        <taxon>Metazoa</taxon>
        <taxon>Chordata</taxon>
        <taxon>Craniata</taxon>
        <taxon>Vertebrata</taxon>
        <taxon>Euteleostomi</taxon>
        <taxon>Mammalia</taxon>
        <taxon>Eutheria</taxon>
        <taxon>Euarchontoglires</taxon>
        <taxon>Glires</taxon>
        <taxon>Rodentia</taxon>
        <taxon>Myomorpha</taxon>
        <taxon>Muroidea</taxon>
        <taxon>Muridae</taxon>
        <taxon>Murinae</taxon>
        <taxon>Mus</taxon>
        <taxon>Mus</taxon>
    </lineage>
</organism>